<organism>
    <name type="scientific">Mycobacterium tuberculosis (strain CDC 1551 / Oshkosh)</name>
    <dbReference type="NCBI Taxonomy" id="83331"/>
    <lineage>
        <taxon>Bacteria</taxon>
        <taxon>Bacillati</taxon>
        <taxon>Actinomycetota</taxon>
        <taxon>Actinomycetes</taxon>
        <taxon>Mycobacteriales</taxon>
        <taxon>Mycobacteriaceae</taxon>
        <taxon>Mycobacterium</taxon>
        <taxon>Mycobacterium tuberculosis complex</taxon>
    </lineage>
</organism>
<evidence type="ECO:0000250" key="1">
    <source>
        <dbReference type="UniProtKB" id="P9WLW9"/>
    </source>
</evidence>
<evidence type="ECO:0000305" key="2"/>
<name>Y1498_MYCTO</name>
<feature type="chain" id="PRO_0000427406" description="Uncharacterised methyltransferase MT1546">
    <location>
        <begin position="1"/>
        <end position="269"/>
    </location>
</feature>
<proteinExistence type="inferred from homology"/>
<reference key="1">
    <citation type="journal article" date="2002" name="J. Bacteriol.">
        <title>Whole-genome comparison of Mycobacterium tuberculosis clinical and laboratory strains.</title>
        <authorList>
            <person name="Fleischmann R.D."/>
            <person name="Alland D."/>
            <person name="Eisen J.A."/>
            <person name="Carpenter L."/>
            <person name="White O."/>
            <person name="Peterson J.D."/>
            <person name="DeBoy R.T."/>
            <person name="Dodson R.J."/>
            <person name="Gwinn M.L."/>
            <person name="Haft D.H."/>
            <person name="Hickey E.K."/>
            <person name="Kolonay J.F."/>
            <person name="Nelson W.C."/>
            <person name="Umayam L.A."/>
            <person name="Ermolaeva M.D."/>
            <person name="Salzberg S.L."/>
            <person name="Delcher A."/>
            <person name="Utterback T.R."/>
            <person name="Weidman J.F."/>
            <person name="Khouri H.M."/>
            <person name="Gill J."/>
            <person name="Mikula A."/>
            <person name="Bishai W."/>
            <person name="Jacobs W.R. Jr."/>
            <person name="Venter J.C."/>
            <person name="Fraser C.M."/>
        </authorList>
    </citation>
    <scope>NUCLEOTIDE SEQUENCE [LARGE SCALE GENOMIC DNA]</scope>
    <source>
        <strain>CDC 1551 / Oshkosh</strain>
    </source>
</reference>
<sequence length="269" mass="29986">MRCIIKRLFQNILTRSKRGSADGGSAEALPPKSLRQFVGGAYKEVGAEFVGYLVDLCGLQPDEAVLDVGCGSGRMALPLTGYLNSEGRYAGFDISQKAIAWCQEHITSAHPNFQFEVSDIYNSLYNPKGKYQSLDFRFPYPDASFDVVFLTSVFTHMFPPDVEHYLDEISRVLKPGGRCLSTYFLLNDESLAHIAEGKSAHNFQHEGPGYRTIHKKRPEEAIGLPETFVRDVYGKFGLAVHEPLHYGSWSGREPHLSFQDIVIATKTAS</sequence>
<comment type="similarity">
    <text evidence="2">Belongs to the methyltransferase superfamily.</text>
</comment>
<comment type="caution">
    <text evidence="1">The predicted start codon is CTG.</text>
</comment>
<comment type="sequence caution" evidence="1">
    <conflict type="erroneous initiation">
        <sequence resource="EMBL-CDS" id="AAK45812"/>
    </conflict>
    <text>Truncated N-terminus.</text>
</comment>
<keyword id="KW-0489">Methyltransferase</keyword>
<keyword id="KW-1185">Reference proteome</keyword>
<keyword id="KW-0808">Transferase</keyword>
<accession>P9WLW8</accession>
<accession>L0T9L2</accession>
<accession>P71779</accession>
<dbReference type="EC" id="2.1.1.-"/>
<dbReference type="EMBL" id="AE000516">
    <property type="protein sequence ID" value="AAK45812.1"/>
    <property type="status" value="ALT_INIT"/>
    <property type="molecule type" value="Genomic_DNA"/>
</dbReference>
<dbReference type="PIR" id="E70712">
    <property type="entry name" value="E70712"/>
</dbReference>
<dbReference type="SMR" id="P9WLW8"/>
<dbReference type="KEGG" id="mtc:MT1546"/>
<dbReference type="HOGENOM" id="CLU_066423_0_0_11"/>
<dbReference type="Proteomes" id="UP000001020">
    <property type="component" value="Chromosome"/>
</dbReference>
<dbReference type="GO" id="GO:0008168">
    <property type="term" value="F:methyltransferase activity"/>
    <property type="evidence" value="ECO:0007669"/>
    <property type="project" value="UniProtKB-KW"/>
</dbReference>
<dbReference type="GO" id="GO:0032259">
    <property type="term" value="P:methylation"/>
    <property type="evidence" value="ECO:0007669"/>
    <property type="project" value="UniProtKB-KW"/>
</dbReference>
<dbReference type="CDD" id="cd02440">
    <property type="entry name" value="AdoMet_MTases"/>
    <property type="match status" value="1"/>
</dbReference>
<dbReference type="Gene3D" id="3.40.50.150">
    <property type="entry name" value="Vaccinia Virus protein VP39"/>
    <property type="match status" value="1"/>
</dbReference>
<dbReference type="InterPro" id="IPR025714">
    <property type="entry name" value="Methyltranfer_dom"/>
</dbReference>
<dbReference type="InterPro" id="IPR050508">
    <property type="entry name" value="Methyltransf_Superfamily"/>
</dbReference>
<dbReference type="InterPro" id="IPR029063">
    <property type="entry name" value="SAM-dependent_MTases_sf"/>
</dbReference>
<dbReference type="PANTHER" id="PTHR42912">
    <property type="entry name" value="METHYLTRANSFERASE"/>
    <property type="match status" value="1"/>
</dbReference>
<dbReference type="PANTHER" id="PTHR42912:SF98">
    <property type="entry name" value="UNCHARACTERISED METHYLTRANSFERASE RV1498C"/>
    <property type="match status" value="1"/>
</dbReference>
<dbReference type="Pfam" id="PF13847">
    <property type="entry name" value="Methyltransf_31"/>
    <property type="match status" value="1"/>
</dbReference>
<dbReference type="SUPFAM" id="SSF53335">
    <property type="entry name" value="S-adenosyl-L-methionine-dependent methyltransferases"/>
    <property type="match status" value="1"/>
</dbReference>
<gene>
    <name type="ordered locus">MT1546</name>
</gene>
<protein>
    <recommendedName>
        <fullName>Uncharacterised methyltransferase MT1546</fullName>
        <ecNumber>2.1.1.-</ecNumber>
    </recommendedName>
</protein>